<protein>
    <recommendedName>
        <fullName>Alpha-conotoxin-like Rt20.2</fullName>
    </recommendedName>
</protein>
<evidence type="ECO:0000250" key="1"/>
<evidence type="ECO:0000250" key="2">
    <source>
        <dbReference type="UniProtKB" id="A0A0A0VBX4"/>
    </source>
</evidence>
<evidence type="ECO:0000250" key="3">
    <source>
        <dbReference type="UniProtKB" id="C3VVN5"/>
    </source>
</evidence>
<evidence type="ECO:0000250" key="4">
    <source>
        <dbReference type="UniProtKB" id="P0C1W6"/>
    </source>
</evidence>
<evidence type="ECO:0000255" key="5"/>
<evidence type="ECO:0000305" key="6"/>
<feature type="signal peptide" evidence="5">
    <location>
        <begin position="1"/>
        <end position="24"/>
    </location>
</feature>
<feature type="propeptide" id="PRO_0000391828" evidence="1">
    <location>
        <begin position="25"/>
        <end position="45"/>
    </location>
</feature>
<feature type="chain" id="PRO_0000391829" description="Alpha-conotoxin-like Rt20.2">
    <location>
        <begin position="46"/>
        <end position="92"/>
    </location>
</feature>
<feature type="modified residue" description="4-carboxyglutamate" evidence="1">
    <location>
        <position position="49"/>
    </location>
</feature>
<feature type="modified residue" description="4-hydroxyproline" evidence="1">
    <location>
        <position position="55"/>
    </location>
</feature>
<feature type="disulfide bond" description="Interchain (with C-63)" evidence="2">
    <location>
        <position position="50"/>
    </location>
</feature>
<feature type="disulfide bond" description="Interchain (with C-51)" evidence="2">
    <location>
        <position position="62"/>
    </location>
</feature>
<feature type="disulfide bond" evidence="2">
    <location>
        <begin position="63"/>
        <end position="72"/>
    </location>
</feature>
<feature type="disulfide bond" evidence="2">
    <location>
        <begin position="68"/>
        <end position="80"/>
    </location>
</feature>
<feature type="disulfide bond" evidence="2">
    <location>
        <begin position="73"/>
        <end position="90"/>
    </location>
</feature>
<feature type="disulfide bond" evidence="2">
    <location>
        <begin position="78"/>
        <end position="92"/>
    </location>
</feature>
<name>CXAT2_CONRT</name>
<sequence>MPKLEMMLLVLLILPLSYFSAAGGQVVQGDLHSDVLARYLQRGDRDARECQVNTPGSRWGKCCLNRMCGPMCCPESHCYCIYHRRRGHGCSC</sequence>
<keyword id="KW-0008">Acetylcholine receptor inhibiting toxin</keyword>
<keyword id="KW-1015">Disulfide bond</keyword>
<keyword id="KW-0301">Gamma-carboxyglutamic acid</keyword>
<keyword id="KW-0379">Hydroxylation</keyword>
<keyword id="KW-0872">Ion channel impairing toxin</keyword>
<keyword id="KW-0528">Neurotoxin</keyword>
<keyword id="KW-0629">Postsynaptic neurotoxin</keyword>
<keyword id="KW-0964">Secreted</keyword>
<keyword id="KW-0732">Signal</keyword>
<keyword id="KW-0800">Toxin</keyword>
<proteinExistence type="evidence at transcript level"/>
<comment type="function">
    <text evidence="4">Alpha-conotoxins act on postsynaptic membranes, they bind to the nicotinic acetylcholine receptors (nAChR) and thus inhibit them. Through its two C-terminal domains, this homodimeric protein would bind to two nAChR allosteric sites, located outside the nAChR C-loop of the principal binding face and at the adjacent binding interface in a clockwise direction. This toxin specifically blocks mammalian neuronal nAChR of the alpha-7/CHRNA7, alpha-3-beta-2/CHRNA3-CHRNB2 and alpha-4-beta-2/CHRNA4-CHRNB2 subtypes.</text>
</comment>
<comment type="subunit">
    <text evidence="3">Hetero-, homo- or pseudo-homodimer (identical sequence, different post-translational modifications).</text>
</comment>
<comment type="subcellular location">
    <subcellularLocation>
        <location>Secreted</location>
    </subcellularLocation>
</comment>
<comment type="tissue specificity">
    <text>Expressed by the venom duct.</text>
</comment>
<comment type="domain">
    <text>The cysteine framework is XX (C-CC-C-CC-C-C-C-C).</text>
</comment>
<comment type="domain">
    <text evidence="4">Displays a mini-granulin fold, a structure composed of two short, stacked beta-hairpins connected by two parallel disulfide bonds. This newly described fold is derived from the same cysteine connectivity as knottins (ICK fold). The name 'mini-granulin fold' comes from the structural homology with the N-terminal region of the human granulin.</text>
</comment>
<comment type="similarity">
    <text evidence="6">Belongs to the conotoxin D superfamily.</text>
</comment>
<reference key="1">
    <citation type="journal article" date="2009" name="Biochemistry">
        <title>Novel alpha D-conopeptides and their precursors identified by cDNA cloning define the D-conotoxin superfamily.</title>
        <authorList>
            <person name="Loughnan M.L."/>
            <person name="Nicke A."/>
            <person name="Lawrence N."/>
            <person name="Lewis R.J."/>
        </authorList>
    </citation>
    <scope>NUCLEOTIDE SEQUENCE [MRNA]</scope>
    <source>
        <tissue>Venom duct</tissue>
    </source>
</reference>
<dbReference type="SMR" id="P0CE35"/>
<dbReference type="TCDB" id="8.B.16.3.1">
    <property type="family name" value="the maurocalcine (maca) family"/>
</dbReference>
<dbReference type="GO" id="GO:0005576">
    <property type="term" value="C:extracellular region"/>
    <property type="evidence" value="ECO:0007669"/>
    <property type="project" value="UniProtKB-SubCell"/>
</dbReference>
<dbReference type="GO" id="GO:0035792">
    <property type="term" value="C:host cell postsynaptic membrane"/>
    <property type="evidence" value="ECO:0007669"/>
    <property type="project" value="UniProtKB-KW"/>
</dbReference>
<dbReference type="GO" id="GO:0030550">
    <property type="term" value="F:acetylcholine receptor inhibitor activity"/>
    <property type="evidence" value="ECO:0007669"/>
    <property type="project" value="UniProtKB-KW"/>
</dbReference>
<dbReference type="GO" id="GO:0099106">
    <property type="term" value="F:ion channel regulator activity"/>
    <property type="evidence" value="ECO:0007669"/>
    <property type="project" value="UniProtKB-KW"/>
</dbReference>
<dbReference type="GO" id="GO:0090729">
    <property type="term" value="F:toxin activity"/>
    <property type="evidence" value="ECO:0007669"/>
    <property type="project" value="UniProtKB-KW"/>
</dbReference>
<accession>P0CE35</accession>
<organism>
    <name type="scientific">Conus rattus</name>
    <name type="common">Rat cone</name>
    <dbReference type="NCBI Taxonomy" id="72283"/>
    <lineage>
        <taxon>Eukaryota</taxon>
        <taxon>Metazoa</taxon>
        <taxon>Spiralia</taxon>
        <taxon>Lophotrochozoa</taxon>
        <taxon>Mollusca</taxon>
        <taxon>Gastropoda</taxon>
        <taxon>Caenogastropoda</taxon>
        <taxon>Neogastropoda</taxon>
        <taxon>Conoidea</taxon>
        <taxon>Conidae</taxon>
        <taxon>Conus</taxon>
        <taxon>Rhizoconus</taxon>
    </lineage>
</organism>